<keyword id="KW-0028">Amino-acid biosynthesis</keyword>
<keyword id="KW-0057">Aromatic amino acid biosynthesis</keyword>
<keyword id="KW-0274">FAD</keyword>
<keyword id="KW-0285">Flavoprotein</keyword>
<keyword id="KW-0288">FMN</keyword>
<keyword id="KW-0456">Lyase</keyword>
<keyword id="KW-0521">NADP</keyword>
<evidence type="ECO:0000255" key="1">
    <source>
        <dbReference type="HAMAP-Rule" id="MF_00300"/>
    </source>
</evidence>
<organism>
    <name type="scientific">Staphylococcus aureus (strain N315)</name>
    <dbReference type="NCBI Taxonomy" id="158879"/>
    <lineage>
        <taxon>Bacteria</taxon>
        <taxon>Bacillati</taxon>
        <taxon>Bacillota</taxon>
        <taxon>Bacilli</taxon>
        <taxon>Bacillales</taxon>
        <taxon>Staphylococcaceae</taxon>
        <taxon>Staphylococcus</taxon>
    </lineage>
</organism>
<protein>
    <recommendedName>
        <fullName evidence="1">Chorismate synthase</fullName>
        <shortName evidence="1">CS</shortName>
        <ecNumber evidence="1">4.2.3.5</ecNumber>
    </recommendedName>
    <alternativeName>
        <fullName evidence="1">5-enolpyruvylshikimate-3-phosphate phospholyase</fullName>
    </alternativeName>
</protein>
<dbReference type="EC" id="4.2.3.5" evidence="1"/>
<dbReference type="EMBL" id="BA000018">
    <property type="protein sequence ID" value="BAB42559.1"/>
    <property type="molecule type" value="Genomic_DNA"/>
</dbReference>
<dbReference type="PIR" id="B89925">
    <property type="entry name" value="B89925"/>
</dbReference>
<dbReference type="RefSeq" id="WP_001269921.1">
    <property type="nucleotide sequence ID" value="NC_002745.2"/>
</dbReference>
<dbReference type="SMR" id="P63614"/>
<dbReference type="EnsemblBacteria" id="BAB42559">
    <property type="protein sequence ID" value="BAB42559"/>
    <property type="gene ID" value="BAB42559"/>
</dbReference>
<dbReference type="KEGG" id="sau:SA1299"/>
<dbReference type="HOGENOM" id="CLU_034547_2_0_9"/>
<dbReference type="UniPathway" id="UPA00053">
    <property type="reaction ID" value="UER00090"/>
</dbReference>
<dbReference type="GO" id="GO:0005829">
    <property type="term" value="C:cytosol"/>
    <property type="evidence" value="ECO:0007669"/>
    <property type="project" value="TreeGrafter"/>
</dbReference>
<dbReference type="GO" id="GO:0004107">
    <property type="term" value="F:chorismate synthase activity"/>
    <property type="evidence" value="ECO:0007669"/>
    <property type="project" value="UniProtKB-UniRule"/>
</dbReference>
<dbReference type="GO" id="GO:0010181">
    <property type="term" value="F:FMN binding"/>
    <property type="evidence" value="ECO:0007669"/>
    <property type="project" value="TreeGrafter"/>
</dbReference>
<dbReference type="GO" id="GO:0008652">
    <property type="term" value="P:amino acid biosynthetic process"/>
    <property type="evidence" value="ECO:0007669"/>
    <property type="project" value="UniProtKB-KW"/>
</dbReference>
<dbReference type="GO" id="GO:0009073">
    <property type="term" value="P:aromatic amino acid family biosynthetic process"/>
    <property type="evidence" value="ECO:0007669"/>
    <property type="project" value="UniProtKB-KW"/>
</dbReference>
<dbReference type="GO" id="GO:0009423">
    <property type="term" value="P:chorismate biosynthetic process"/>
    <property type="evidence" value="ECO:0007669"/>
    <property type="project" value="UniProtKB-UniRule"/>
</dbReference>
<dbReference type="CDD" id="cd07304">
    <property type="entry name" value="Chorismate_synthase"/>
    <property type="match status" value="1"/>
</dbReference>
<dbReference type="FunFam" id="3.60.150.10:FF:000002">
    <property type="entry name" value="Chorismate synthase"/>
    <property type="match status" value="1"/>
</dbReference>
<dbReference type="Gene3D" id="3.60.150.10">
    <property type="entry name" value="Chorismate synthase AroC"/>
    <property type="match status" value="1"/>
</dbReference>
<dbReference type="HAMAP" id="MF_00300">
    <property type="entry name" value="Chorismate_synth"/>
    <property type="match status" value="1"/>
</dbReference>
<dbReference type="InterPro" id="IPR000453">
    <property type="entry name" value="Chorismate_synth"/>
</dbReference>
<dbReference type="InterPro" id="IPR035904">
    <property type="entry name" value="Chorismate_synth_AroC_sf"/>
</dbReference>
<dbReference type="InterPro" id="IPR020541">
    <property type="entry name" value="Chorismate_synthase_CS"/>
</dbReference>
<dbReference type="NCBIfam" id="TIGR00033">
    <property type="entry name" value="aroC"/>
    <property type="match status" value="1"/>
</dbReference>
<dbReference type="NCBIfam" id="NF003793">
    <property type="entry name" value="PRK05382.1"/>
    <property type="match status" value="1"/>
</dbReference>
<dbReference type="PANTHER" id="PTHR21085">
    <property type="entry name" value="CHORISMATE SYNTHASE"/>
    <property type="match status" value="1"/>
</dbReference>
<dbReference type="PANTHER" id="PTHR21085:SF0">
    <property type="entry name" value="CHORISMATE SYNTHASE"/>
    <property type="match status" value="1"/>
</dbReference>
<dbReference type="Pfam" id="PF01264">
    <property type="entry name" value="Chorismate_synt"/>
    <property type="match status" value="1"/>
</dbReference>
<dbReference type="PIRSF" id="PIRSF001456">
    <property type="entry name" value="Chorismate_synth"/>
    <property type="match status" value="1"/>
</dbReference>
<dbReference type="SUPFAM" id="SSF103263">
    <property type="entry name" value="Chorismate synthase, AroC"/>
    <property type="match status" value="1"/>
</dbReference>
<dbReference type="PROSITE" id="PS00787">
    <property type="entry name" value="CHORISMATE_SYNTHASE_1"/>
    <property type="match status" value="1"/>
</dbReference>
<dbReference type="PROSITE" id="PS00788">
    <property type="entry name" value="CHORISMATE_SYNTHASE_2"/>
    <property type="match status" value="1"/>
</dbReference>
<dbReference type="PROSITE" id="PS00789">
    <property type="entry name" value="CHORISMATE_SYNTHASE_3"/>
    <property type="match status" value="1"/>
</dbReference>
<name>AROC_STAAN</name>
<comment type="function">
    <text evidence="1">Catalyzes the anti-1,4-elimination of the C-3 phosphate and the C-6 proR hydrogen from 5-enolpyruvylshikimate-3-phosphate (EPSP) to yield chorismate, which is the branch point compound that serves as the starting substrate for the three terminal pathways of aromatic amino acid biosynthesis. This reaction introduces a second double bond into the aromatic ring system.</text>
</comment>
<comment type="catalytic activity">
    <reaction evidence="1">
        <text>5-O-(1-carboxyvinyl)-3-phosphoshikimate = chorismate + phosphate</text>
        <dbReference type="Rhea" id="RHEA:21020"/>
        <dbReference type="ChEBI" id="CHEBI:29748"/>
        <dbReference type="ChEBI" id="CHEBI:43474"/>
        <dbReference type="ChEBI" id="CHEBI:57701"/>
        <dbReference type="EC" id="4.2.3.5"/>
    </reaction>
</comment>
<comment type="cofactor">
    <cofactor evidence="1">
        <name>FMNH2</name>
        <dbReference type="ChEBI" id="CHEBI:57618"/>
    </cofactor>
    <text evidence="1">Reduced FMN (FMNH(2)).</text>
</comment>
<comment type="pathway">
    <text evidence="1">Metabolic intermediate biosynthesis; chorismate biosynthesis; chorismate from D-erythrose 4-phosphate and phosphoenolpyruvate: step 7/7.</text>
</comment>
<comment type="subunit">
    <text evidence="1">Homotetramer.</text>
</comment>
<comment type="similarity">
    <text evidence="1">Belongs to the chorismate synthase family.</text>
</comment>
<gene>
    <name evidence="1" type="primary">aroC</name>
    <name type="ordered locus">SA1299</name>
</gene>
<feature type="chain" id="PRO_0000140643" description="Chorismate synthase">
    <location>
        <begin position="1"/>
        <end position="388"/>
    </location>
</feature>
<feature type="binding site" evidence="1">
    <location>
        <position position="39"/>
    </location>
    <ligand>
        <name>NADP(+)</name>
        <dbReference type="ChEBI" id="CHEBI:58349"/>
    </ligand>
</feature>
<feature type="binding site" evidence="1">
    <location>
        <position position="45"/>
    </location>
    <ligand>
        <name>NADP(+)</name>
        <dbReference type="ChEBI" id="CHEBI:58349"/>
    </ligand>
</feature>
<feature type="binding site" evidence="1">
    <location>
        <begin position="132"/>
        <end position="134"/>
    </location>
    <ligand>
        <name>FMN</name>
        <dbReference type="ChEBI" id="CHEBI:58210"/>
    </ligand>
</feature>
<feature type="binding site" evidence="1">
    <location>
        <begin position="251"/>
        <end position="252"/>
    </location>
    <ligand>
        <name>FMN</name>
        <dbReference type="ChEBI" id="CHEBI:58210"/>
    </ligand>
</feature>
<feature type="binding site" evidence="1">
    <location>
        <position position="296"/>
    </location>
    <ligand>
        <name>FMN</name>
        <dbReference type="ChEBI" id="CHEBI:58210"/>
    </ligand>
</feature>
<feature type="binding site" evidence="1">
    <location>
        <begin position="311"/>
        <end position="315"/>
    </location>
    <ligand>
        <name>FMN</name>
        <dbReference type="ChEBI" id="CHEBI:58210"/>
    </ligand>
</feature>
<feature type="binding site" evidence="1">
    <location>
        <position position="337"/>
    </location>
    <ligand>
        <name>FMN</name>
        <dbReference type="ChEBI" id="CHEBI:58210"/>
    </ligand>
</feature>
<accession>P63614</accession>
<accession>Q99U23</accession>
<sequence length="388" mass="42991">MRYLTSGESHGPQLTVIVEGIPANLEIKVEDINKEMFKRQGGYGRGRRMQIEKDTVEIVSGVRNGYTLGSPITMVVTNDDFTHWRKIMGAAPISEEERENMKRTITKPRPGHADLVGGMKYNHRDLRNVLERSSARETAARVAVGALCKVLLQQLDIDIYSRVVEIGGIKDKDFYDSETFKANLDRNDVRVIDDSIAQAMRDKIDEAKNEGDSIGGVVQVVVENMPVGVGSYVHYDRKLDGKIAQGVVSINAFKGVSFGEGFKAAEKPGSEIQDEILYNSEIGYYRGSNHLGGLEGGMSNGMPIIVNGVMKPIPTLYKPLNSVDINTKEDFKATIERSDSCAVPAASIVCEHVVAFEIAKALLEEFQSNHIEQLQQQIADRRQLNVEF</sequence>
<proteinExistence type="inferred from homology"/>
<reference key="1">
    <citation type="journal article" date="2001" name="Lancet">
        <title>Whole genome sequencing of meticillin-resistant Staphylococcus aureus.</title>
        <authorList>
            <person name="Kuroda M."/>
            <person name="Ohta T."/>
            <person name="Uchiyama I."/>
            <person name="Baba T."/>
            <person name="Yuzawa H."/>
            <person name="Kobayashi I."/>
            <person name="Cui L."/>
            <person name="Oguchi A."/>
            <person name="Aoki K."/>
            <person name="Nagai Y."/>
            <person name="Lian J.-Q."/>
            <person name="Ito T."/>
            <person name="Kanamori M."/>
            <person name="Matsumaru H."/>
            <person name="Maruyama A."/>
            <person name="Murakami H."/>
            <person name="Hosoyama A."/>
            <person name="Mizutani-Ui Y."/>
            <person name="Takahashi N.K."/>
            <person name="Sawano T."/>
            <person name="Inoue R."/>
            <person name="Kaito C."/>
            <person name="Sekimizu K."/>
            <person name="Hirakawa H."/>
            <person name="Kuhara S."/>
            <person name="Goto S."/>
            <person name="Yabuzaki J."/>
            <person name="Kanehisa M."/>
            <person name="Yamashita A."/>
            <person name="Oshima K."/>
            <person name="Furuya K."/>
            <person name="Yoshino C."/>
            <person name="Shiba T."/>
            <person name="Hattori M."/>
            <person name="Ogasawara N."/>
            <person name="Hayashi H."/>
            <person name="Hiramatsu K."/>
        </authorList>
    </citation>
    <scope>NUCLEOTIDE SEQUENCE [LARGE SCALE GENOMIC DNA]</scope>
    <source>
        <strain>N315</strain>
    </source>
</reference>